<organism>
    <name type="scientific">Arabidopsis thaliana</name>
    <name type="common">Mouse-ear cress</name>
    <dbReference type="NCBI Taxonomy" id="3702"/>
    <lineage>
        <taxon>Eukaryota</taxon>
        <taxon>Viridiplantae</taxon>
        <taxon>Streptophyta</taxon>
        <taxon>Embryophyta</taxon>
        <taxon>Tracheophyta</taxon>
        <taxon>Spermatophyta</taxon>
        <taxon>Magnoliopsida</taxon>
        <taxon>eudicotyledons</taxon>
        <taxon>Gunneridae</taxon>
        <taxon>Pentapetalae</taxon>
        <taxon>rosids</taxon>
        <taxon>malvids</taxon>
        <taxon>Brassicales</taxon>
        <taxon>Brassicaceae</taxon>
        <taxon>Camelineae</taxon>
        <taxon>Arabidopsis</taxon>
    </lineage>
</organism>
<proteinExistence type="evidence at transcript level"/>
<dbReference type="EMBL" id="AC005990">
    <property type="protein sequence ID" value="AAC98042.1"/>
    <property type="status" value="ALT_SEQ"/>
    <property type="molecule type" value="Genomic_DNA"/>
</dbReference>
<dbReference type="EMBL" id="AC007945">
    <property type="protein sequence ID" value="AAF79587.1"/>
    <property type="status" value="ALT_SEQ"/>
    <property type="molecule type" value="Genomic_DNA"/>
</dbReference>
<dbReference type="EMBL" id="CP002684">
    <property type="protein sequence ID" value="AEE30394.1"/>
    <property type="molecule type" value="Genomic_DNA"/>
</dbReference>
<dbReference type="EMBL" id="AF324684">
    <property type="protein sequence ID" value="AAG40035.1"/>
    <property type="molecule type" value="mRNA"/>
</dbReference>
<dbReference type="EMBL" id="AF325025">
    <property type="protein sequence ID" value="AAG40377.1"/>
    <property type="molecule type" value="mRNA"/>
</dbReference>
<dbReference type="EMBL" id="AF329504">
    <property type="protein sequence ID" value="AAG42921.1"/>
    <property type="molecule type" value="mRNA"/>
</dbReference>
<dbReference type="EMBL" id="AF372875">
    <property type="protein sequence ID" value="AAK49591.1"/>
    <property type="molecule type" value="mRNA"/>
</dbReference>
<dbReference type="EMBL" id="AF372901">
    <property type="protein sequence ID" value="AAK49617.1"/>
    <property type="molecule type" value="mRNA"/>
</dbReference>
<dbReference type="EMBL" id="AY057727">
    <property type="protein sequence ID" value="AAL15357.1"/>
    <property type="molecule type" value="mRNA"/>
</dbReference>
<dbReference type="EMBL" id="AY113940">
    <property type="protein sequence ID" value="AAM44988.1"/>
    <property type="molecule type" value="mRNA"/>
</dbReference>
<dbReference type="PIR" id="E86368">
    <property type="entry name" value="E86368"/>
</dbReference>
<dbReference type="SMR" id="Q9LQC8"/>
<dbReference type="BioGRID" id="24195">
    <property type="interactions" value="5"/>
</dbReference>
<dbReference type="BioGRID" id="28605">
    <property type="interactions" value="10"/>
</dbReference>
<dbReference type="FunCoup" id="Q9LQC8">
    <property type="interactions" value="3884"/>
</dbReference>
<dbReference type="STRING" id="3702.Q9LQC8"/>
<dbReference type="PaxDb" id="3702-AT1G23490.1"/>
<dbReference type="EnsemblPlants" id="AT1G23490.1">
    <property type="protein sequence ID" value="AT1G23490.1"/>
    <property type="gene ID" value="AT1G23490"/>
</dbReference>
<dbReference type="EnsemblPlants" id="AT1G70490.1">
    <property type="protein sequence ID" value="AT1G70490.1"/>
    <property type="gene ID" value="AT1G70490"/>
</dbReference>
<dbReference type="EnsemblPlants" id="AT1G70490.2">
    <property type="protein sequence ID" value="AT1G70490.2"/>
    <property type="gene ID" value="AT1G70490"/>
</dbReference>
<dbReference type="EnsemblPlants" id="AT1G70490.3">
    <property type="protein sequence ID" value="AT1G70490.3"/>
    <property type="gene ID" value="AT1G70490"/>
</dbReference>
<dbReference type="EnsemblPlants" id="AT1G70490.4">
    <property type="protein sequence ID" value="AT1G70490.4"/>
    <property type="gene ID" value="AT1G70490"/>
</dbReference>
<dbReference type="EnsemblPlants" id="AT1G70490.5">
    <property type="protein sequence ID" value="AT1G70490.5"/>
    <property type="gene ID" value="AT1G70490"/>
</dbReference>
<dbReference type="EnsemblPlants" id="AT1G70490.6">
    <property type="protein sequence ID" value="AT1G70490.6"/>
    <property type="gene ID" value="AT1G70490"/>
</dbReference>
<dbReference type="EnsemblPlants" id="AT1G70490.7">
    <property type="protein sequence ID" value="AT1G70490.7"/>
    <property type="gene ID" value="AT1G70490"/>
</dbReference>
<dbReference type="GeneID" id="838957"/>
<dbReference type="Gramene" id="AT1G23490.1">
    <property type="protein sequence ID" value="AT1G23490.1"/>
    <property type="gene ID" value="AT1G23490"/>
</dbReference>
<dbReference type="Gramene" id="AT1G70490.1">
    <property type="protein sequence ID" value="AT1G70490.1"/>
    <property type="gene ID" value="AT1G70490"/>
</dbReference>
<dbReference type="Gramene" id="AT1G70490.2">
    <property type="protein sequence ID" value="AT1G70490.2"/>
    <property type="gene ID" value="AT1G70490"/>
</dbReference>
<dbReference type="Gramene" id="AT1G70490.3">
    <property type="protein sequence ID" value="AT1G70490.3"/>
    <property type="gene ID" value="AT1G70490"/>
</dbReference>
<dbReference type="Gramene" id="AT1G70490.4">
    <property type="protein sequence ID" value="AT1G70490.4"/>
    <property type="gene ID" value="AT1G70490"/>
</dbReference>
<dbReference type="Gramene" id="AT1G70490.5">
    <property type="protein sequence ID" value="AT1G70490.5"/>
    <property type="gene ID" value="AT1G70490"/>
</dbReference>
<dbReference type="Gramene" id="AT1G70490.6">
    <property type="protein sequence ID" value="AT1G70490.6"/>
    <property type="gene ID" value="AT1G70490"/>
</dbReference>
<dbReference type="Gramene" id="AT1G70490.7">
    <property type="protein sequence ID" value="AT1G70490.7"/>
    <property type="gene ID" value="AT1G70490"/>
</dbReference>
<dbReference type="KEGG" id="ath:AT1G23490"/>
<dbReference type="KEGG" id="ath:AT1G70490"/>
<dbReference type="Araport" id="AT1G23490"/>
<dbReference type="TAIR" id="AT1G23490">
    <property type="gene designation" value="ARF1"/>
</dbReference>
<dbReference type="eggNOG" id="KOG0070">
    <property type="taxonomic scope" value="Eukaryota"/>
</dbReference>
<dbReference type="HOGENOM" id="CLU_040729_9_3_1"/>
<dbReference type="InParanoid" id="Q9LQC8"/>
<dbReference type="OMA" id="KEIRILX"/>
<dbReference type="OrthoDB" id="1027437at2759"/>
<dbReference type="PhylomeDB" id="Q9LQC8"/>
<dbReference type="PRO" id="PR:Q9LQC8"/>
<dbReference type="Proteomes" id="UP000006548">
    <property type="component" value="Chromosome 1"/>
</dbReference>
<dbReference type="ExpressionAtlas" id="Q9LQC8">
    <property type="expression patterns" value="baseline and differential"/>
</dbReference>
<dbReference type="GO" id="GO:0005794">
    <property type="term" value="C:Golgi apparatus"/>
    <property type="evidence" value="ECO:0007005"/>
    <property type="project" value="TAIR"/>
</dbReference>
<dbReference type="GO" id="GO:0005634">
    <property type="term" value="C:nucleus"/>
    <property type="evidence" value="ECO:0007005"/>
    <property type="project" value="TAIR"/>
</dbReference>
<dbReference type="GO" id="GO:0005525">
    <property type="term" value="F:GTP binding"/>
    <property type="evidence" value="ECO:0000250"/>
    <property type="project" value="TAIR"/>
</dbReference>
<dbReference type="GO" id="GO:0003924">
    <property type="term" value="F:GTPase activity"/>
    <property type="evidence" value="ECO:0007669"/>
    <property type="project" value="InterPro"/>
</dbReference>
<dbReference type="GO" id="GO:0003729">
    <property type="term" value="F:mRNA binding"/>
    <property type="evidence" value="ECO:0000314"/>
    <property type="project" value="TAIR"/>
</dbReference>
<dbReference type="GO" id="GO:0016004">
    <property type="term" value="F:phospholipase activator activity"/>
    <property type="evidence" value="ECO:0000304"/>
    <property type="project" value="TAIR"/>
</dbReference>
<dbReference type="GO" id="GO:0015031">
    <property type="term" value="P:protein transport"/>
    <property type="evidence" value="ECO:0007669"/>
    <property type="project" value="UniProtKB-KW"/>
</dbReference>
<dbReference type="GO" id="GO:0016192">
    <property type="term" value="P:vesicle-mediated transport"/>
    <property type="evidence" value="ECO:0007669"/>
    <property type="project" value="UniProtKB-KW"/>
</dbReference>
<dbReference type="CDD" id="cd04150">
    <property type="entry name" value="Arf1_5_like"/>
    <property type="match status" value="1"/>
</dbReference>
<dbReference type="FunFam" id="3.40.50.300:FF:003500">
    <property type="entry name" value="ADP-ribosylation factor 1"/>
    <property type="match status" value="1"/>
</dbReference>
<dbReference type="Gene3D" id="3.40.50.300">
    <property type="entry name" value="P-loop containing nucleotide triphosphate hydrolases"/>
    <property type="match status" value="1"/>
</dbReference>
<dbReference type="InterPro" id="IPR045872">
    <property type="entry name" value="Arf1-5-like"/>
</dbReference>
<dbReference type="InterPro" id="IPR027417">
    <property type="entry name" value="P-loop_NTPase"/>
</dbReference>
<dbReference type="InterPro" id="IPR005225">
    <property type="entry name" value="Small_GTP-bd"/>
</dbReference>
<dbReference type="InterPro" id="IPR024156">
    <property type="entry name" value="Small_GTPase_ARF"/>
</dbReference>
<dbReference type="InterPro" id="IPR006689">
    <property type="entry name" value="Small_GTPase_ARF/SAR"/>
</dbReference>
<dbReference type="NCBIfam" id="TIGR00231">
    <property type="entry name" value="small_GTP"/>
    <property type="match status" value="1"/>
</dbReference>
<dbReference type="PANTHER" id="PTHR11711">
    <property type="entry name" value="ADP RIBOSYLATION FACTOR-RELATED"/>
    <property type="match status" value="1"/>
</dbReference>
<dbReference type="Pfam" id="PF00025">
    <property type="entry name" value="Arf"/>
    <property type="match status" value="1"/>
</dbReference>
<dbReference type="PRINTS" id="PR00328">
    <property type="entry name" value="SAR1GTPBP"/>
</dbReference>
<dbReference type="SMART" id="SM00177">
    <property type="entry name" value="ARF"/>
    <property type="match status" value="1"/>
</dbReference>
<dbReference type="SMART" id="SM00175">
    <property type="entry name" value="RAB"/>
    <property type="match status" value="1"/>
</dbReference>
<dbReference type="SMART" id="SM00178">
    <property type="entry name" value="SAR"/>
    <property type="match status" value="1"/>
</dbReference>
<dbReference type="SUPFAM" id="SSF52540">
    <property type="entry name" value="P-loop containing nucleoside triphosphate hydrolases"/>
    <property type="match status" value="1"/>
</dbReference>
<dbReference type="PROSITE" id="PS51417">
    <property type="entry name" value="ARF"/>
    <property type="match status" value="1"/>
</dbReference>
<protein>
    <recommendedName>
        <fullName>ADP-ribosylation factor 2-A</fullName>
        <shortName>AtARF2</shortName>
    </recommendedName>
</protein>
<accession>Q9LQC8</accession>
<accession>Q9S9K6</accession>
<accession>Q9SGY6</accession>
<accession>Q9SRC3</accession>
<gene>
    <name type="primary">ARF2-A</name>
    <name type="synonym">ARFA1-A</name>
    <name type="synonym">ARFA2-A</name>
    <name type="ordered locus">At1g23490</name>
    <name type="ORF">F28C11.12</name>
    <name type="ORF">F5O8.5</name>
</gene>
<evidence type="ECO:0000250" key="1"/>
<evidence type="ECO:0000255" key="2"/>
<evidence type="ECO:0000269" key="3">
    <source>
    </source>
</evidence>
<evidence type="ECO:0000305" key="4"/>
<sequence>MGLSFAKLFSRLFAKKEMRILMVGLDAAGKTTILYKLKLGEIVTTIPTIGFNVETVEYKNISFTVWDVGGQDKIRPLWRHYFQNTQGLIFVVDSNDRDRVVEARDELHRMLNEDELRDAVLLVFANKQDLPNAMNAAEITDKLGLHSLRQRHWYIQSTCATSGEGLYEGLDWLSNNIAGKA</sequence>
<keyword id="KW-0931">ER-Golgi transport</keyword>
<keyword id="KW-0333">Golgi apparatus</keyword>
<keyword id="KW-0342">GTP-binding</keyword>
<keyword id="KW-0449">Lipoprotein</keyword>
<keyword id="KW-0519">Myristate</keyword>
<keyword id="KW-0547">Nucleotide-binding</keyword>
<keyword id="KW-0653">Protein transport</keyword>
<keyword id="KW-1185">Reference proteome</keyword>
<keyword id="KW-0813">Transport</keyword>
<feature type="initiator methionine" description="Removed" evidence="2">
    <location>
        <position position="1"/>
    </location>
</feature>
<feature type="chain" id="PRO_0000415771" description="ADP-ribosylation factor 2-A">
    <location>
        <begin position="2"/>
        <end position="181"/>
    </location>
</feature>
<feature type="binding site" evidence="1">
    <location>
        <begin position="24"/>
        <end position="31"/>
    </location>
    <ligand>
        <name>GTP</name>
        <dbReference type="ChEBI" id="CHEBI:37565"/>
    </ligand>
</feature>
<feature type="binding site" evidence="1">
    <location>
        <begin position="67"/>
        <end position="71"/>
    </location>
    <ligand>
        <name>GTP</name>
        <dbReference type="ChEBI" id="CHEBI:37565"/>
    </ligand>
</feature>
<feature type="binding site" evidence="1">
    <location>
        <begin position="126"/>
        <end position="129"/>
    </location>
    <ligand>
        <name>GTP</name>
        <dbReference type="ChEBI" id="CHEBI:37565"/>
    </ligand>
</feature>
<feature type="lipid moiety-binding region" description="N-myristoyl glycine" evidence="2">
    <location>
        <position position="2"/>
    </location>
</feature>
<name>ARF2A_ARATH</name>
<comment type="function">
    <text>GTP-binding protein involved in protein trafficking; may modulate vesicle budding and uncoating within the Golgi apparatus.</text>
</comment>
<comment type="activity regulation">
    <text evidence="3">Activated by AGD10.</text>
</comment>
<comment type="subcellular location">
    <subcellularLocation>
        <location>Golgi apparatus</location>
    </subcellularLocation>
</comment>
<comment type="similarity">
    <text evidence="4">Belongs to the small GTPase superfamily. Arf family.</text>
</comment>
<comment type="sequence caution" evidence="4">
    <conflict type="erroneous gene model prediction">
        <sequence resource="EMBL-CDS" id="AAC98042"/>
    </conflict>
</comment>
<comment type="sequence caution" evidence="4">
    <conflict type="erroneous gene model prediction">
        <sequence resource="EMBL-CDS" id="AAF79587"/>
    </conflict>
</comment>
<reference key="1">
    <citation type="journal article" date="2000" name="Nature">
        <title>Sequence and analysis of chromosome 1 of the plant Arabidopsis thaliana.</title>
        <authorList>
            <person name="Theologis A."/>
            <person name="Ecker J.R."/>
            <person name="Palm C.J."/>
            <person name="Federspiel N.A."/>
            <person name="Kaul S."/>
            <person name="White O."/>
            <person name="Alonso J."/>
            <person name="Altafi H."/>
            <person name="Araujo R."/>
            <person name="Bowman C.L."/>
            <person name="Brooks S.Y."/>
            <person name="Buehler E."/>
            <person name="Chan A."/>
            <person name="Chao Q."/>
            <person name="Chen H."/>
            <person name="Cheuk R.F."/>
            <person name="Chin C.W."/>
            <person name="Chung M.K."/>
            <person name="Conn L."/>
            <person name="Conway A.B."/>
            <person name="Conway A.R."/>
            <person name="Creasy T.H."/>
            <person name="Dewar K."/>
            <person name="Dunn P."/>
            <person name="Etgu P."/>
            <person name="Feldblyum T.V."/>
            <person name="Feng J.-D."/>
            <person name="Fong B."/>
            <person name="Fujii C.Y."/>
            <person name="Gill J.E."/>
            <person name="Goldsmith A.D."/>
            <person name="Haas B."/>
            <person name="Hansen N.F."/>
            <person name="Hughes B."/>
            <person name="Huizar L."/>
            <person name="Hunter J.L."/>
            <person name="Jenkins J."/>
            <person name="Johnson-Hopson C."/>
            <person name="Khan S."/>
            <person name="Khaykin E."/>
            <person name="Kim C.J."/>
            <person name="Koo H.L."/>
            <person name="Kremenetskaia I."/>
            <person name="Kurtz D.B."/>
            <person name="Kwan A."/>
            <person name="Lam B."/>
            <person name="Langin-Hooper S."/>
            <person name="Lee A."/>
            <person name="Lee J.M."/>
            <person name="Lenz C.A."/>
            <person name="Li J.H."/>
            <person name="Li Y.-P."/>
            <person name="Lin X."/>
            <person name="Liu S.X."/>
            <person name="Liu Z.A."/>
            <person name="Luros J.S."/>
            <person name="Maiti R."/>
            <person name="Marziali A."/>
            <person name="Militscher J."/>
            <person name="Miranda M."/>
            <person name="Nguyen M."/>
            <person name="Nierman W.C."/>
            <person name="Osborne B.I."/>
            <person name="Pai G."/>
            <person name="Peterson J."/>
            <person name="Pham P.K."/>
            <person name="Rizzo M."/>
            <person name="Rooney T."/>
            <person name="Rowley D."/>
            <person name="Sakano H."/>
            <person name="Salzberg S.L."/>
            <person name="Schwartz J.R."/>
            <person name="Shinn P."/>
            <person name="Southwick A.M."/>
            <person name="Sun H."/>
            <person name="Tallon L.J."/>
            <person name="Tambunga G."/>
            <person name="Toriumi M.J."/>
            <person name="Town C.D."/>
            <person name="Utterback T."/>
            <person name="Van Aken S."/>
            <person name="Vaysberg M."/>
            <person name="Vysotskaia V.S."/>
            <person name="Walker M."/>
            <person name="Wu D."/>
            <person name="Yu G."/>
            <person name="Fraser C.M."/>
            <person name="Venter J.C."/>
            <person name="Davis R.W."/>
        </authorList>
    </citation>
    <scope>NUCLEOTIDE SEQUENCE [LARGE SCALE GENOMIC DNA]</scope>
    <source>
        <strain>cv. Columbia</strain>
    </source>
</reference>
<reference key="2">
    <citation type="journal article" date="2017" name="Plant J.">
        <title>Araport11: a complete reannotation of the Arabidopsis thaliana reference genome.</title>
        <authorList>
            <person name="Cheng C.Y."/>
            <person name="Krishnakumar V."/>
            <person name="Chan A.P."/>
            <person name="Thibaud-Nissen F."/>
            <person name="Schobel S."/>
            <person name="Town C.D."/>
        </authorList>
    </citation>
    <scope>GENOME REANNOTATION</scope>
    <source>
        <strain>cv. Columbia</strain>
    </source>
</reference>
<reference key="3">
    <citation type="journal article" date="2003" name="Science">
        <title>Empirical analysis of transcriptional activity in the Arabidopsis genome.</title>
        <authorList>
            <person name="Yamada K."/>
            <person name="Lim J."/>
            <person name="Dale J.M."/>
            <person name="Chen H."/>
            <person name="Shinn P."/>
            <person name="Palm C.J."/>
            <person name="Southwick A.M."/>
            <person name="Wu H.C."/>
            <person name="Kim C.J."/>
            <person name="Nguyen M."/>
            <person name="Pham P.K."/>
            <person name="Cheuk R.F."/>
            <person name="Karlin-Newmann G."/>
            <person name="Liu S.X."/>
            <person name="Lam B."/>
            <person name="Sakano H."/>
            <person name="Wu T."/>
            <person name="Yu G."/>
            <person name="Miranda M."/>
            <person name="Quach H.L."/>
            <person name="Tripp M."/>
            <person name="Chang C.H."/>
            <person name="Lee J.M."/>
            <person name="Toriumi M.J."/>
            <person name="Chan M.M."/>
            <person name="Tang C.C."/>
            <person name="Onodera C.S."/>
            <person name="Deng J.M."/>
            <person name="Akiyama K."/>
            <person name="Ansari Y."/>
            <person name="Arakawa T."/>
            <person name="Banh J."/>
            <person name="Banno F."/>
            <person name="Bowser L."/>
            <person name="Brooks S.Y."/>
            <person name="Carninci P."/>
            <person name="Chao Q."/>
            <person name="Choy N."/>
            <person name="Enju A."/>
            <person name="Goldsmith A.D."/>
            <person name="Gurjal M."/>
            <person name="Hansen N.F."/>
            <person name="Hayashizaki Y."/>
            <person name="Johnson-Hopson C."/>
            <person name="Hsuan V.W."/>
            <person name="Iida K."/>
            <person name="Karnes M."/>
            <person name="Khan S."/>
            <person name="Koesema E."/>
            <person name="Ishida J."/>
            <person name="Jiang P.X."/>
            <person name="Jones T."/>
            <person name="Kawai J."/>
            <person name="Kamiya A."/>
            <person name="Meyers C."/>
            <person name="Nakajima M."/>
            <person name="Narusaka M."/>
            <person name="Seki M."/>
            <person name="Sakurai T."/>
            <person name="Satou M."/>
            <person name="Tamse R."/>
            <person name="Vaysberg M."/>
            <person name="Wallender E.K."/>
            <person name="Wong C."/>
            <person name="Yamamura Y."/>
            <person name="Yuan S."/>
            <person name="Shinozaki K."/>
            <person name="Davis R.W."/>
            <person name="Theologis A."/>
            <person name="Ecker J.R."/>
        </authorList>
    </citation>
    <scope>NUCLEOTIDE SEQUENCE [LARGE SCALE MRNA]</scope>
    <source>
        <strain>cv. Columbia</strain>
    </source>
</reference>
<reference key="4">
    <citation type="journal article" date="2006" name="Plant Physiol.">
        <title>RPA, a class II ARFGAP protein, activates ARF1 and U5 and plays a role in root hair development in Arabidopsis.</title>
        <authorList>
            <person name="Song X.-F."/>
            <person name="Yang C.-Y."/>
            <person name="Liu J."/>
            <person name="Yang W.-C."/>
        </authorList>
    </citation>
    <scope>ACTIVITY REGULATION</scope>
</reference>